<name>THAS_MACFA</name>
<comment type="function">
    <text evidence="3">Catalyzes the conversion of prostaglandin H2 (PGH2) to thromboxane A2 (TXA2), a potent inducer of blood vessel constriction and platelet aggregation. Also cleaves PGH2 to 12-hydroxy-heptadecatrienoicacid (12-HHT) and malondialdehyde, which is known to act as a mediator of DNA damage. 12-HHT and malondialdehyde are formed stoichiometrically in the same amounts as TXA2. Additionally, displays dehydratase activity, toward (15S)-hydroperoxy-(5Z,8Z,11Z,13E)-eicosatetraenoate (15(S)-HPETE) producing 15-KETE and 15-HETE.</text>
</comment>
<comment type="catalytic activity">
    <reaction evidence="3">
        <text>prostaglandin H2 = thromboxane A2</text>
        <dbReference type="Rhea" id="RHEA:17137"/>
        <dbReference type="ChEBI" id="CHEBI:57405"/>
        <dbReference type="ChEBI" id="CHEBI:57445"/>
        <dbReference type="EC" id="5.3.99.5"/>
    </reaction>
    <physiologicalReaction direction="left-to-right" evidence="3">
        <dbReference type="Rhea" id="RHEA:17138"/>
    </physiologicalReaction>
</comment>
<comment type="catalytic activity">
    <reaction evidence="3">
        <text>prostaglandin H2 = (12S)-hydroxy-(5Z,8E,10E)-heptadecatrienoate + malonaldehyde</text>
        <dbReference type="Rhea" id="RHEA:48644"/>
        <dbReference type="ChEBI" id="CHEBI:57405"/>
        <dbReference type="ChEBI" id="CHEBI:90694"/>
        <dbReference type="ChEBI" id="CHEBI:566274"/>
    </reaction>
</comment>
<comment type="catalytic activity">
    <reaction evidence="3">
        <text>a hydroperoxyeicosatetraenoate = an oxoeicosatetraenoate + H2O</text>
        <dbReference type="Rhea" id="RHEA:55556"/>
        <dbReference type="ChEBI" id="CHEBI:15377"/>
        <dbReference type="ChEBI" id="CHEBI:59720"/>
        <dbReference type="ChEBI" id="CHEBI:131859"/>
        <dbReference type="EC" id="4.2.1.152"/>
    </reaction>
    <physiologicalReaction direction="left-to-right" evidence="3">
        <dbReference type="Rhea" id="RHEA:55557"/>
    </physiologicalReaction>
</comment>
<comment type="catalytic activity">
    <reaction evidence="3">
        <text>(15S)-hydroperoxy-(5Z,8Z,11Z,13E)-eicosatetraenoate = 15-oxo-(5Z,8Z,11Z,13E)-eicosatetraenoate + H2O</text>
        <dbReference type="Rhea" id="RHEA:48636"/>
        <dbReference type="ChEBI" id="CHEBI:15377"/>
        <dbReference type="ChEBI" id="CHEBI:57410"/>
        <dbReference type="ChEBI" id="CHEBI:57446"/>
    </reaction>
    <physiologicalReaction direction="left-to-right" evidence="3">
        <dbReference type="Rhea" id="RHEA:48637"/>
    </physiologicalReaction>
</comment>
<comment type="catalytic activity">
    <reaction evidence="3">
        <text>(15S)-hydroperoxy-(5Z,8Z,11Z,13E)-eicosatetraenoate + AH2 = (15S)-hydroxy-(5Z,8Z,11Z,13E)-eicosatetraenoate + A + H2O</text>
        <dbReference type="Rhea" id="RHEA:48856"/>
        <dbReference type="ChEBI" id="CHEBI:13193"/>
        <dbReference type="ChEBI" id="CHEBI:15377"/>
        <dbReference type="ChEBI" id="CHEBI:17499"/>
        <dbReference type="ChEBI" id="CHEBI:57409"/>
        <dbReference type="ChEBI" id="CHEBI:57446"/>
    </reaction>
    <physiologicalReaction direction="left-to-right" evidence="3">
        <dbReference type="Rhea" id="RHEA:48857"/>
    </physiologicalReaction>
</comment>
<comment type="cofactor">
    <cofactor evidence="3">
        <name>heme</name>
        <dbReference type="ChEBI" id="CHEBI:30413"/>
    </cofactor>
</comment>
<comment type="subunit">
    <text evidence="3">Monomer.</text>
</comment>
<comment type="subcellular location">
    <subcellularLocation>
        <location evidence="3">Endoplasmic reticulum membrane</location>
        <topology evidence="1">Multi-pass membrane protein</topology>
    </subcellularLocation>
</comment>
<comment type="similarity">
    <text evidence="5">Belongs to the cytochrome P450 family.</text>
</comment>
<comment type="caution">
    <text evidence="5">It is uncertain whether Met-1 is the initiator. An alternative upstream Met is found in primates, but not in other mammalians.</text>
</comment>
<comment type="sequence caution" evidence="5">
    <conflict type="erroneous initiation">
        <sequence resource="EMBL-CDS" id="BAE72925"/>
    </conflict>
</comment>
<reference key="1">
    <citation type="submission" date="2005-06" db="EMBL/GenBank/DDBJ databases">
        <title>DNA sequences of macaque genes expressed in brain or testis and its evolutionary implications.</title>
        <authorList>
            <consortium name="International consortium for macaque cDNA sequencing and analysis"/>
        </authorList>
    </citation>
    <scope>NUCLEOTIDE SEQUENCE [LARGE SCALE MRNA]</scope>
    <source>
        <tissue>Brain cortex</tissue>
    </source>
</reference>
<organism>
    <name type="scientific">Macaca fascicularis</name>
    <name type="common">Crab-eating macaque</name>
    <name type="synonym">Cynomolgus monkey</name>
    <dbReference type="NCBI Taxonomy" id="9541"/>
    <lineage>
        <taxon>Eukaryota</taxon>
        <taxon>Metazoa</taxon>
        <taxon>Chordata</taxon>
        <taxon>Craniata</taxon>
        <taxon>Vertebrata</taxon>
        <taxon>Euteleostomi</taxon>
        <taxon>Mammalia</taxon>
        <taxon>Eutheria</taxon>
        <taxon>Euarchontoglires</taxon>
        <taxon>Primates</taxon>
        <taxon>Haplorrhini</taxon>
        <taxon>Catarrhini</taxon>
        <taxon>Cercopithecidae</taxon>
        <taxon>Cercopithecinae</taxon>
        <taxon>Macaca</taxon>
    </lineage>
</organism>
<feature type="chain" id="PRO_0000380715" description="Thromboxane-A synthase">
    <location>
        <begin position="1"/>
        <end position="533"/>
    </location>
</feature>
<feature type="topological domain" description="Cytoplasmic" evidence="3">
    <location>
        <begin position="1"/>
        <end position="10"/>
    </location>
</feature>
<feature type="transmembrane region" description="Helical" evidence="4">
    <location>
        <begin position="11"/>
        <end position="31"/>
    </location>
</feature>
<feature type="topological domain" description="Lumenal" evidence="3">
    <location>
        <begin position="32"/>
        <end position="75"/>
    </location>
</feature>
<feature type="transmembrane region" description="Helical" evidence="4">
    <location>
        <begin position="76"/>
        <end position="96"/>
    </location>
</feature>
<feature type="topological domain" description="Cytoplasmic" evidence="3">
    <location>
        <begin position="97"/>
        <end position="223"/>
    </location>
</feature>
<feature type="transmembrane region" description="Helical" evidence="4">
    <location>
        <begin position="224"/>
        <end position="244"/>
    </location>
</feature>
<feature type="topological domain" description="Lumenal" evidence="3">
    <location>
        <begin position="245"/>
        <end position="335"/>
    </location>
</feature>
<feature type="transmembrane region" description="Helical" evidence="4">
    <location>
        <begin position="336"/>
        <end position="356"/>
    </location>
</feature>
<feature type="topological domain" description="Cytoplasmic" evidence="3">
    <location>
        <begin position="357"/>
        <end position="533"/>
    </location>
</feature>
<feature type="binding site" description="axial binding residue" evidence="2">
    <location>
        <position position="479"/>
    </location>
    <ligand>
        <name>heme</name>
        <dbReference type="ChEBI" id="CHEBI:30413"/>
    </ligand>
    <ligandPart>
        <name>Fe</name>
        <dbReference type="ChEBI" id="CHEBI:18248"/>
    </ligandPart>
</feature>
<evidence type="ECO:0000250" key="1"/>
<evidence type="ECO:0000250" key="2">
    <source>
        <dbReference type="UniProtKB" id="P14779"/>
    </source>
</evidence>
<evidence type="ECO:0000250" key="3">
    <source>
        <dbReference type="UniProtKB" id="P24557"/>
    </source>
</evidence>
<evidence type="ECO:0000255" key="4"/>
<evidence type="ECO:0000305" key="5"/>
<proteinExistence type="evidence at transcript level"/>
<gene>
    <name type="primary">TBXAS1</name>
    <name type="synonym">CYP5</name>
    <name type="synonym">CYP5A1</name>
    <name type="ORF">QccE-11311</name>
</gene>
<protein>
    <recommendedName>
        <fullName>Thromboxane-A synthase</fullName>
        <shortName>TXA synthase</shortName>
        <shortName>TXS</shortName>
        <ecNumber evidence="3">5.3.99.5</ecNumber>
    </recommendedName>
    <alternativeName>
        <fullName>Cytochrome P450 5A1</fullName>
    </alternativeName>
    <alternativeName>
        <fullName evidence="3">Hydroperoxy icosatetraenoate dehydratase</fullName>
        <ecNumber evidence="3">4.2.1.152</ecNumber>
    </alternativeName>
</protein>
<sequence>MEALGFLKLEVNGPMVTVALSVALLALLKWYSTSAFSRLEKLGLRHPKPSPFIGNLMFFRQGFWESQMELRKLYGPLCGYYLGRRMFIVISEPDMIKQVLVENFSNFTNRMASGLEFKSVADSVLFLRDKRWEEVRGALMSAFSPEKLNEMTPLISQACDLLLAHLKRYAESGDAFDIQRCYRNYTTDVVASVAFGTPVDSQQAPEDPFVKHCKRFFEFCIPRPILVLLLSFPSIMVPLARILPNKNRDELNGFFNKLIRNVIALRDQQAAEERRRDFLQMVLDARHSASPVGVQDFDMVGDVFSSTRCKPNPSRQHQAGPMARPLTVDEIVGQAFIFLIAGYEIVTNTLSFATYLLATNPDCQEKLLREVDLFKEKHMVPEFCSLEEGLPYLDMVIAETLRMYPPAFRFTREAAQDCEVLGQRIPAGAVLEMAVGALHHDPEHWPSPETFNPERFTAEAQQQHRPFTYLPFGAGPRSCLGVRLGLLEVKLTLLHVLHKFQFQACPETQVPLQLESKSALGPKNGVYIKIVSR</sequence>
<accession>Q2PG45</accession>
<dbReference type="EC" id="5.3.99.5" evidence="3"/>
<dbReference type="EC" id="4.2.1.152" evidence="3"/>
<dbReference type="EMBL" id="AB220392">
    <property type="protein sequence ID" value="BAE72925.1"/>
    <property type="status" value="ALT_INIT"/>
    <property type="molecule type" value="mRNA"/>
</dbReference>
<dbReference type="RefSeq" id="NP_001271608.1">
    <property type="nucleotide sequence ID" value="NM_001284679.1"/>
</dbReference>
<dbReference type="SMR" id="Q2PG45"/>
<dbReference type="STRING" id="9541.ENSMFAP00000011724"/>
<dbReference type="eggNOG" id="KOG0158">
    <property type="taxonomic scope" value="Eukaryota"/>
</dbReference>
<dbReference type="Proteomes" id="UP000233100">
    <property type="component" value="Unplaced"/>
</dbReference>
<dbReference type="GO" id="GO:0005789">
    <property type="term" value="C:endoplasmic reticulum membrane"/>
    <property type="evidence" value="ECO:0000250"/>
    <property type="project" value="UniProtKB"/>
</dbReference>
<dbReference type="GO" id="GO:0036134">
    <property type="term" value="F:12-hydroxyheptadecatrienoic acid synthase activity"/>
    <property type="evidence" value="ECO:0007669"/>
    <property type="project" value="RHEA"/>
</dbReference>
<dbReference type="GO" id="GO:0020037">
    <property type="term" value="F:heme binding"/>
    <property type="evidence" value="ECO:0000250"/>
    <property type="project" value="UniProtKB"/>
</dbReference>
<dbReference type="GO" id="GO:0106256">
    <property type="term" value="F:hydroperoxy icosatetraenoate dehydratase activity"/>
    <property type="evidence" value="ECO:0000250"/>
    <property type="project" value="UniProtKB"/>
</dbReference>
<dbReference type="GO" id="GO:0005506">
    <property type="term" value="F:iron ion binding"/>
    <property type="evidence" value="ECO:0007669"/>
    <property type="project" value="InterPro"/>
</dbReference>
<dbReference type="GO" id="GO:0016705">
    <property type="term" value="F:oxidoreductase activity, acting on paired donors, with incorporation or reduction of molecular oxygen"/>
    <property type="evidence" value="ECO:0007669"/>
    <property type="project" value="InterPro"/>
</dbReference>
<dbReference type="GO" id="GO:0008395">
    <property type="term" value="F:steroid hydroxylase activity"/>
    <property type="evidence" value="ECO:0007669"/>
    <property type="project" value="TreeGrafter"/>
</dbReference>
<dbReference type="GO" id="GO:0004796">
    <property type="term" value="F:thromboxane-A synthase activity"/>
    <property type="evidence" value="ECO:0007669"/>
    <property type="project" value="UniProtKB-EC"/>
</dbReference>
<dbReference type="GO" id="GO:0006690">
    <property type="term" value="P:icosanoid metabolic process"/>
    <property type="evidence" value="ECO:0000250"/>
    <property type="project" value="UniProtKB"/>
</dbReference>
<dbReference type="GO" id="GO:0001516">
    <property type="term" value="P:prostaglandin biosynthetic process"/>
    <property type="evidence" value="ECO:0000250"/>
    <property type="project" value="UniProtKB"/>
</dbReference>
<dbReference type="FunFam" id="1.10.630.10:FF:000003">
    <property type="entry name" value="cytochrome P450 3A12-like isoform X2"/>
    <property type="match status" value="1"/>
</dbReference>
<dbReference type="Gene3D" id="1.10.630.10">
    <property type="entry name" value="Cytochrome P450"/>
    <property type="match status" value="1"/>
</dbReference>
<dbReference type="InterPro" id="IPR001128">
    <property type="entry name" value="Cyt_P450"/>
</dbReference>
<dbReference type="InterPro" id="IPR017972">
    <property type="entry name" value="Cyt_P450_CS"/>
</dbReference>
<dbReference type="InterPro" id="IPR002401">
    <property type="entry name" value="Cyt_P450_E_grp-I"/>
</dbReference>
<dbReference type="InterPro" id="IPR036396">
    <property type="entry name" value="Cyt_P450_sf"/>
</dbReference>
<dbReference type="InterPro" id="IPR050705">
    <property type="entry name" value="Cytochrome_P450_3A"/>
</dbReference>
<dbReference type="PANTHER" id="PTHR24302:SF47">
    <property type="entry name" value="CYTOCHROME P450"/>
    <property type="match status" value="1"/>
</dbReference>
<dbReference type="PANTHER" id="PTHR24302">
    <property type="entry name" value="CYTOCHROME P450 FAMILY 3"/>
    <property type="match status" value="1"/>
</dbReference>
<dbReference type="Pfam" id="PF00067">
    <property type="entry name" value="p450"/>
    <property type="match status" value="1"/>
</dbReference>
<dbReference type="PRINTS" id="PR00463">
    <property type="entry name" value="EP450I"/>
</dbReference>
<dbReference type="PRINTS" id="PR00385">
    <property type="entry name" value="P450"/>
</dbReference>
<dbReference type="SUPFAM" id="SSF48264">
    <property type="entry name" value="Cytochrome P450"/>
    <property type="match status" value="1"/>
</dbReference>
<dbReference type="PROSITE" id="PS00086">
    <property type="entry name" value="CYTOCHROME_P450"/>
    <property type="match status" value="1"/>
</dbReference>
<keyword id="KW-0256">Endoplasmic reticulum</keyword>
<keyword id="KW-0275">Fatty acid biosynthesis</keyword>
<keyword id="KW-0276">Fatty acid metabolism</keyword>
<keyword id="KW-0349">Heme</keyword>
<keyword id="KW-0408">Iron</keyword>
<keyword id="KW-0413">Isomerase</keyword>
<keyword id="KW-0444">Lipid biosynthesis</keyword>
<keyword id="KW-0443">Lipid metabolism</keyword>
<keyword id="KW-0456">Lyase</keyword>
<keyword id="KW-0472">Membrane</keyword>
<keyword id="KW-0479">Metal-binding</keyword>
<keyword id="KW-0503">Monooxygenase</keyword>
<keyword id="KW-0560">Oxidoreductase</keyword>
<keyword id="KW-0643">Prostaglandin biosynthesis</keyword>
<keyword id="KW-0644">Prostaglandin metabolism</keyword>
<keyword id="KW-1185">Reference proteome</keyword>
<keyword id="KW-0812">Transmembrane</keyword>
<keyword id="KW-1133">Transmembrane helix</keyword>